<accession>Q43299</accession>
<sequence>MASGKVEKMASIDAQLRLLAPKKVSEDDKLVEYDALLLDRFLDILESLHGSGIRETVQELYEHAAEYERTHDTKKLEELGNLITSLDAGDSIVIAKSFSQMLNLANLAEEVQLAYRRRIKKTKKGDFADESSAITESDFEETLRRLVDLKKSPEEIFATLKNQTVDLVLTAHPTQSVRRSLLQKHGRIRDCLSQLYAKDISPDDKQELDEALQRAIQAAFRTDEIRRVQPTPQDEMRMGMSYFHETIWKGVPKFLRRVDTALKNIGINERVPYNVPLIQFSSWMGGDRDGNPRVTPEVTRDVVLLARMMAANMYFTQITDLMFELSMWRCNDEVRARAQELHSQSKSDAKHYIEFWKQIPLSEPYRVILGDVRDKLYNTREHAHKLLANGSSDVPEESTFTHIDQFLEPLELCYKSLCASGDQPIADGSLLDFMRQVSTFGLSLVKLDIRQESDRHTEVMDAITTHLGIGSYRSWSEEKRQEWLLSELRGKRPLFGSDLPMSYEVADAIGTFRVLAELPNDSFGAYIISMATAPSDVLAVELLQRECGIKKPLRVVPLFEKLADLQSAAASMTRLFSIDWYKNRINGTQEVMIGYSDSGKDAGRLSAAWQLYKVQEQLIQVAKEYGVKLTMFHGRGGTVGRGGGPTHLALLSQPPDTIHGSLRVTIQGEVIEQSFGEEHLCFRTLERYTAATLEHGIDPPTSPKPEWRALMDEMAVITTKEYRSVVLQEPRFVEYFRSATPELEYGRMNIGSRPAKRKPGGGIETLRAIPWIFSWTQTRFHLPVWLGCGAAFKHVIEKDIKNLAMLKDMYNQWSFFRVTIDLLEMVFAKGDPGIAALYDKLLVKDELKPFGENLRKSYLEAQKFLLEIAGHKDPLDADPYLKQILRLRDPYTTTLNVFQVYTLKRIRDPSFHVTVRPHLSKEMDANSLAADLVKLNPTSEYPPGLEDTLILTMKGIAAGMQNTG</sequence>
<reference key="1">
    <citation type="online journal article" date="1995" name="Plant Gene Register">
        <title>The C4 phosphoenolpyruvate carboxylase (PEPCase) from grain Amaranth.</title>
        <authorList>
            <person name="Rydzik E."/>
            <person name="Berry J."/>
        </authorList>
        <locator>PGR95-135</locator>
    </citation>
    <scope>NUCLEOTIDE SEQUENCE [MRNA]</scope>
    <source>
        <tissue>Leaf</tissue>
    </source>
</reference>
<protein>
    <recommendedName>
        <fullName>Phosphoenolpyruvate carboxylase</fullName>
        <shortName>PEPC</shortName>
        <shortName>PEPCase</shortName>
        <ecNumber>4.1.1.31</ecNumber>
    </recommendedName>
</protein>
<comment type="function">
    <text>Through the carboxylation of phosphoenolpyruvate (PEP) it forms oxaloacetate, a four-carbon dicarboxylic acid source for the tricarboxylic acid cycle.</text>
</comment>
<comment type="catalytic activity">
    <reaction>
        <text>oxaloacetate + phosphate = phosphoenolpyruvate + hydrogencarbonate</text>
        <dbReference type="Rhea" id="RHEA:28370"/>
        <dbReference type="ChEBI" id="CHEBI:16452"/>
        <dbReference type="ChEBI" id="CHEBI:17544"/>
        <dbReference type="ChEBI" id="CHEBI:43474"/>
        <dbReference type="ChEBI" id="CHEBI:58702"/>
        <dbReference type="EC" id="4.1.1.31"/>
    </reaction>
</comment>
<comment type="cofactor">
    <cofactor evidence="1">
        <name>Mg(2+)</name>
        <dbReference type="ChEBI" id="CHEBI:18420"/>
    </cofactor>
</comment>
<comment type="activity regulation">
    <text evidence="1">By light-reversible phosphorylation.</text>
</comment>
<comment type="pathway">
    <text>Photosynthesis; C4 acid pathway.</text>
</comment>
<comment type="subunit">
    <text evidence="1">Homotetramer.</text>
</comment>
<comment type="subcellular location">
    <subcellularLocation>
        <location>Cytoplasm</location>
    </subcellularLocation>
</comment>
<comment type="similarity">
    <text evidence="2">Belongs to the PEPCase type 1 family.</text>
</comment>
<feature type="chain" id="PRO_0000166656" description="Phosphoenolpyruvate carboxylase">
    <location>
        <begin position="1"/>
        <end position="964"/>
    </location>
</feature>
<feature type="active site" evidence="1">
    <location>
        <position position="172"/>
    </location>
</feature>
<feature type="active site" evidence="1">
    <location>
        <position position="600"/>
    </location>
</feature>
<feature type="modified residue" description="Phosphoserine" evidence="1">
    <location>
        <position position="11"/>
    </location>
</feature>
<organism>
    <name type="scientific">Amaranthus hypochondriacus</name>
    <name type="common">Prince-of-Wales feather</name>
    <name type="synonym">Amaranthus hybridus var. hypochondriacus</name>
    <dbReference type="NCBI Taxonomy" id="28502"/>
    <lineage>
        <taxon>Eukaryota</taxon>
        <taxon>Viridiplantae</taxon>
        <taxon>Streptophyta</taxon>
        <taxon>Embryophyta</taxon>
        <taxon>Tracheophyta</taxon>
        <taxon>Spermatophyta</taxon>
        <taxon>Magnoliopsida</taxon>
        <taxon>eudicotyledons</taxon>
        <taxon>Gunneridae</taxon>
        <taxon>Pentapetalae</taxon>
        <taxon>Caryophyllales</taxon>
        <taxon>Amaranthaceae</taxon>
        <taxon>Amaranthus</taxon>
    </lineage>
</organism>
<keyword id="KW-0021">Allosteric enzyme</keyword>
<keyword id="KW-0120">Carbon dioxide fixation</keyword>
<keyword id="KW-0963">Cytoplasm</keyword>
<keyword id="KW-0456">Lyase</keyword>
<keyword id="KW-0460">Magnesium</keyword>
<keyword id="KW-0597">Phosphoprotein</keyword>
<keyword id="KW-0602">Photosynthesis</keyword>
<proteinExistence type="evidence at transcript level"/>
<evidence type="ECO:0000250" key="1"/>
<evidence type="ECO:0000305" key="2"/>
<dbReference type="EC" id="4.1.1.31"/>
<dbReference type="EMBL" id="Z68125">
    <property type="protein sequence ID" value="CAA92209.1"/>
    <property type="molecule type" value="mRNA"/>
</dbReference>
<dbReference type="EMBL" id="L49175">
    <property type="protein sequence ID" value="AAB18633.1"/>
    <property type="molecule type" value="mRNA"/>
</dbReference>
<dbReference type="SMR" id="Q43299"/>
<dbReference type="BRENDA" id="4.1.1.31">
    <property type="organism ID" value="286"/>
</dbReference>
<dbReference type="UniPathway" id="UPA00322"/>
<dbReference type="GO" id="GO:0048046">
    <property type="term" value="C:apoplast"/>
    <property type="evidence" value="ECO:0007669"/>
    <property type="project" value="TreeGrafter"/>
</dbReference>
<dbReference type="GO" id="GO:0009507">
    <property type="term" value="C:chloroplast"/>
    <property type="evidence" value="ECO:0007669"/>
    <property type="project" value="TreeGrafter"/>
</dbReference>
<dbReference type="GO" id="GO:0005829">
    <property type="term" value="C:cytosol"/>
    <property type="evidence" value="ECO:0007669"/>
    <property type="project" value="TreeGrafter"/>
</dbReference>
<dbReference type="GO" id="GO:0008964">
    <property type="term" value="F:phosphoenolpyruvate carboxylase activity"/>
    <property type="evidence" value="ECO:0000314"/>
    <property type="project" value="CACAO"/>
</dbReference>
<dbReference type="GO" id="GO:0015977">
    <property type="term" value="P:carbon fixation"/>
    <property type="evidence" value="ECO:0007669"/>
    <property type="project" value="UniProtKB-KW"/>
</dbReference>
<dbReference type="GO" id="GO:0048366">
    <property type="term" value="P:leaf development"/>
    <property type="evidence" value="ECO:0007669"/>
    <property type="project" value="TreeGrafter"/>
</dbReference>
<dbReference type="GO" id="GO:0015979">
    <property type="term" value="P:photosynthesis"/>
    <property type="evidence" value="ECO:0007669"/>
    <property type="project" value="UniProtKB-KW"/>
</dbReference>
<dbReference type="GO" id="GO:0006099">
    <property type="term" value="P:tricarboxylic acid cycle"/>
    <property type="evidence" value="ECO:0007669"/>
    <property type="project" value="InterPro"/>
</dbReference>
<dbReference type="FunFam" id="1.20.1440.90:FF:000001">
    <property type="entry name" value="Phosphoenolpyruvate carboxylase 1"/>
    <property type="match status" value="1"/>
</dbReference>
<dbReference type="Gene3D" id="1.20.1440.90">
    <property type="entry name" value="Phosphoenolpyruvate/pyruvate domain"/>
    <property type="match status" value="1"/>
</dbReference>
<dbReference type="HAMAP" id="MF_00595">
    <property type="entry name" value="PEPcase_type1"/>
    <property type="match status" value="1"/>
</dbReference>
<dbReference type="InterPro" id="IPR021135">
    <property type="entry name" value="PEP_COase"/>
</dbReference>
<dbReference type="InterPro" id="IPR022805">
    <property type="entry name" value="PEP_COase_bac/pln-type"/>
</dbReference>
<dbReference type="InterPro" id="IPR018129">
    <property type="entry name" value="PEP_COase_Lys_AS"/>
</dbReference>
<dbReference type="InterPro" id="IPR033129">
    <property type="entry name" value="PEPCASE_His_AS"/>
</dbReference>
<dbReference type="InterPro" id="IPR015813">
    <property type="entry name" value="Pyrv/PenolPyrv_kinase-like_dom"/>
</dbReference>
<dbReference type="NCBIfam" id="NF000584">
    <property type="entry name" value="PRK00009.1"/>
    <property type="match status" value="1"/>
</dbReference>
<dbReference type="PANTHER" id="PTHR30523">
    <property type="entry name" value="PHOSPHOENOLPYRUVATE CARBOXYLASE"/>
    <property type="match status" value="1"/>
</dbReference>
<dbReference type="PANTHER" id="PTHR30523:SF47">
    <property type="entry name" value="PHOSPHOENOLPYRUVATE CARBOXYLASE 2"/>
    <property type="match status" value="1"/>
</dbReference>
<dbReference type="Pfam" id="PF00311">
    <property type="entry name" value="PEPcase"/>
    <property type="match status" value="1"/>
</dbReference>
<dbReference type="PRINTS" id="PR00150">
    <property type="entry name" value="PEPCARBXLASE"/>
</dbReference>
<dbReference type="SUPFAM" id="SSF51621">
    <property type="entry name" value="Phosphoenolpyruvate/pyruvate domain"/>
    <property type="match status" value="1"/>
</dbReference>
<dbReference type="PROSITE" id="PS00781">
    <property type="entry name" value="PEPCASE_1"/>
    <property type="match status" value="1"/>
</dbReference>
<dbReference type="PROSITE" id="PS00393">
    <property type="entry name" value="PEPCASE_2"/>
    <property type="match status" value="1"/>
</dbReference>
<name>CAPP_AMAHP</name>